<name>PSBF_THUPL</name>
<feature type="chain" id="PRO_0000200459" description="Cytochrome b559 subunit beta">
    <location>
        <begin position="1"/>
        <end position="39"/>
    </location>
</feature>
<feature type="transmembrane region" description="Helical" evidence="1">
    <location>
        <begin position="14"/>
        <end position="30"/>
    </location>
</feature>
<feature type="binding site" description="axial binding residue" evidence="1">
    <location>
        <position position="18"/>
    </location>
    <ligand>
        <name>heme</name>
        <dbReference type="ChEBI" id="CHEBI:30413"/>
        <note>ligand shared with alpha subunit</note>
    </ligand>
    <ligandPart>
        <name>Fe</name>
        <dbReference type="ChEBI" id="CHEBI:18248"/>
    </ligandPart>
</feature>
<protein>
    <recommendedName>
        <fullName evidence="1">Cytochrome b559 subunit beta</fullName>
    </recommendedName>
    <alternativeName>
        <fullName evidence="1">PSII reaction center subunit VI</fullName>
    </alternativeName>
</protein>
<organism>
    <name type="scientific">Thuja plicata</name>
    <name type="common">Western red-cedar</name>
    <name type="synonym">Giant arborvitae</name>
    <dbReference type="NCBI Taxonomy" id="3316"/>
    <lineage>
        <taxon>Eukaryota</taxon>
        <taxon>Viridiplantae</taxon>
        <taxon>Streptophyta</taxon>
        <taxon>Embryophyta</taxon>
        <taxon>Tracheophyta</taxon>
        <taxon>Spermatophyta</taxon>
        <taxon>Pinopsida</taxon>
        <taxon>Pinidae</taxon>
        <taxon>Conifers II</taxon>
        <taxon>Cupressales</taxon>
        <taxon>Cupressaceae</taxon>
        <taxon>Thuja</taxon>
    </lineage>
</organism>
<keyword id="KW-0150">Chloroplast</keyword>
<keyword id="KW-0249">Electron transport</keyword>
<keyword id="KW-0349">Heme</keyword>
<keyword id="KW-0408">Iron</keyword>
<keyword id="KW-0472">Membrane</keyword>
<keyword id="KW-0479">Metal-binding</keyword>
<keyword id="KW-0602">Photosynthesis</keyword>
<keyword id="KW-0604">Photosystem II</keyword>
<keyword id="KW-0934">Plastid</keyword>
<keyword id="KW-0793">Thylakoid</keyword>
<keyword id="KW-0812">Transmembrane</keyword>
<keyword id="KW-1133">Transmembrane helix</keyword>
<keyword id="KW-0813">Transport</keyword>
<reference key="1">
    <citation type="submission" date="2002-07" db="EMBL/GenBank/DDBJ databases">
        <title>Parsing out signal and noise for seed-plant phylogenetic inference.</title>
        <authorList>
            <person name="Graham S.W."/>
            <person name="Rai H.S."/>
            <person name="Ikegami K."/>
            <person name="Reeves P.A."/>
            <person name="Olmstead R.G."/>
        </authorList>
    </citation>
    <scope>NUCLEOTIDE SEQUENCE [GENOMIC DNA]</scope>
</reference>
<evidence type="ECO:0000255" key="1">
    <source>
        <dbReference type="HAMAP-Rule" id="MF_00643"/>
    </source>
</evidence>
<gene>
    <name evidence="1" type="primary">psbF</name>
</gene>
<comment type="function">
    <text evidence="1">This b-type cytochrome is tightly associated with the reaction center of photosystem II (PSII). PSII is a light-driven water:plastoquinone oxidoreductase that uses light energy to abstract electrons from H(2)O, generating O(2) and a proton gradient subsequently used for ATP formation. It consists of a core antenna complex that captures photons, and an electron transfer chain that converts photonic excitation into a charge separation.</text>
</comment>
<comment type="cofactor">
    <cofactor evidence="1">
        <name>heme b</name>
        <dbReference type="ChEBI" id="CHEBI:60344"/>
    </cofactor>
    <text evidence="1">With its partner (PsbE) binds heme. PSII binds additional chlorophylls, carotenoids and specific lipids.</text>
</comment>
<comment type="subunit">
    <text evidence="1">Heterodimer of an alpha subunit and a beta subunit. PSII is composed of 1 copy each of membrane proteins PsbA, PsbB, PsbC, PsbD, PsbE, PsbF, PsbH, PsbI, PsbJ, PsbK, PsbL, PsbM, PsbT, PsbX, PsbY, PsbZ, Psb30/Ycf12, at least 3 peripheral proteins of the oxygen-evolving complex and a large number of cofactors. It forms dimeric complexes.</text>
</comment>
<comment type="subcellular location">
    <subcellularLocation>
        <location evidence="1">Plastid</location>
        <location evidence="1">Chloroplast thylakoid membrane</location>
        <topology evidence="1">Single-pass membrane protein</topology>
    </subcellularLocation>
</comment>
<comment type="similarity">
    <text evidence="1">Belongs to the PsbE/PsbF family.</text>
</comment>
<sequence>MTIDRTYPIFTVRWLAVHGLAVPTVFFLGSISAMQFIQR</sequence>
<proteinExistence type="inferred from homology"/>
<accession>Q6EYM7</accession>
<dbReference type="EMBL" id="AF528890">
    <property type="protein sequence ID" value="AAQ09346.1"/>
    <property type="molecule type" value="Genomic_DNA"/>
</dbReference>
<dbReference type="RefSeq" id="YP_009629130.1">
    <property type="nucleotide sequence ID" value="NC_042175.1"/>
</dbReference>
<dbReference type="SMR" id="Q6EYM7"/>
<dbReference type="GeneID" id="40139210"/>
<dbReference type="GO" id="GO:0009535">
    <property type="term" value="C:chloroplast thylakoid membrane"/>
    <property type="evidence" value="ECO:0007669"/>
    <property type="project" value="UniProtKB-SubCell"/>
</dbReference>
<dbReference type="GO" id="GO:0009539">
    <property type="term" value="C:photosystem II reaction center"/>
    <property type="evidence" value="ECO:0007669"/>
    <property type="project" value="InterPro"/>
</dbReference>
<dbReference type="GO" id="GO:0009055">
    <property type="term" value="F:electron transfer activity"/>
    <property type="evidence" value="ECO:0007669"/>
    <property type="project" value="UniProtKB-UniRule"/>
</dbReference>
<dbReference type="GO" id="GO:0020037">
    <property type="term" value="F:heme binding"/>
    <property type="evidence" value="ECO:0007669"/>
    <property type="project" value="InterPro"/>
</dbReference>
<dbReference type="GO" id="GO:0005506">
    <property type="term" value="F:iron ion binding"/>
    <property type="evidence" value="ECO:0007669"/>
    <property type="project" value="UniProtKB-UniRule"/>
</dbReference>
<dbReference type="GO" id="GO:0009767">
    <property type="term" value="P:photosynthetic electron transport chain"/>
    <property type="evidence" value="ECO:0007669"/>
    <property type="project" value="InterPro"/>
</dbReference>
<dbReference type="HAMAP" id="MF_00643">
    <property type="entry name" value="PSII_PsbF"/>
    <property type="match status" value="1"/>
</dbReference>
<dbReference type="InterPro" id="IPR006241">
    <property type="entry name" value="PSII_cyt_b559_bsu"/>
</dbReference>
<dbReference type="InterPro" id="IPR006216">
    <property type="entry name" value="PSII_cyt_b559_CS"/>
</dbReference>
<dbReference type="InterPro" id="IPR013081">
    <property type="entry name" value="PSII_cyt_b559_N"/>
</dbReference>
<dbReference type="NCBIfam" id="TIGR01333">
    <property type="entry name" value="cyt_b559_beta"/>
    <property type="match status" value="1"/>
</dbReference>
<dbReference type="Pfam" id="PF00283">
    <property type="entry name" value="Cytochrom_B559"/>
    <property type="match status" value="1"/>
</dbReference>
<dbReference type="PIRSF" id="PIRSF000037">
    <property type="entry name" value="PsbF"/>
    <property type="match status" value="1"/>
</dbReference>
<dbReference type="SUPFAM" id="SSF161045">
    <property type="entry name" value="Cytochrome b559 subunits"/>
    <property type="match status" value="1"/>
</dbReference>
<dbReference type="PROSITE" id="PS00537">
    <property type="entry name" value="CYTOCHROME_B559"/>
    <property type="match status" value="1"/>
</dbReference>
<geneLocation type="chloroplast"/>